<keyword id="KW-0186">Copper</keyword>
<keyword id="KW-0249">Electron transport</keyword>
<keyword id="KW-0460">Magnesium</keyword>
<keyword id="KW-0472">Membrane</keyword>
<keyword id="KW-0479">Metal-binding</keyword>
<keyword id="KW-0496">Mitochondrion</keyword>
<keyword id="KW-0999">Mitochondrion inner membrane</keyword>
<keyword id="KW-0597">Phosphoprotein</keyword>
<keyword id="KW-0679">Respiratory chain</keyword>
<keyword id="KW-1278">Translocase</keyword>
<keyword id="KW-0812">Transmembrane</keyword>
<keyword id="KW-1133">Transmembrane helix</keyword>
<keyword id="KW-0813">Transport</keyword>
<accession>P50678</accession>
<dbReference type="EC" id="7.1.1.9"/>
<dbReference type="EMBL" id="U18822">
    <property type="protein sequence ID" value="AAA75604.1"/>
    <property type="molecule type" value="Genomic_DNA"/>
</dbReference>
<dbReference type="SMR" id="P50678"/>
<dbReference type="GO" id="GO:0005743">
    <property type="term" value="C:mitochondrial inner membrane"/>
    <property type="evidence" value="ECO:0007669"/>
    <property type="project" value="UniProtKB-SubCell"/>
</dbReference>
<dbReference type="GO" id="GO:0045277">
    <property type="term" value="C:respiratory chain complex IV"/>
    <property type="evidence" value="ECO:0000250"/>
    <property type="project" value="UniProtKB"/>
</dbReference>
<dbReference type="GO" id="GO:0005507">
    <property type="term" value="F:copper ion binding"/>
    <property type="evidence" value="ECO:0007669"/>
    <property type="project" value="InterPro"/>
</dbReference>
<dbReference type="GO" id="GO:0004129">
    <property type="term" value="F:cytochrome-c oxidase activity"/>
    <property type="evidence" value="ECO:0007669"/>
    <property type="project" value="UniProtKB-EC"/>
</dbReference>
<dbReference type="GO" id="GO:0042773">
    <property type="term" value="P:ATP synthesis coupled electron transport"/>
    <property type="evidence" value="ECO:0007669"/>
    <property type="project" value="TreeGrafter"/>
</dbReference>
<dbReference type="CDD" id="cd13912">
    <property type="entry name" value="CcO_II_C"/>
    <property type="match status" value="1"/>
</dbReference>
<dbReference type="FunFam" id="1.10.287.90:FF:000001">
    <property type="entry name" value="Cytochrome c oxidase subunit 2"/>
    <property type="match status" value="1"/>
</dbReference>
<dbReference type="FunFam" id="2.60.40.420:FF:000001">
    <property type="entry name" value="Cytochrome c oxidase subunit 2"/>
    <property type="match status" value="1"/>
</dbReference>
<dbReference type="Gene3D" id="1.10.287.90">
    <property type="match status" value="1"/>
</dbReference>
<dbReference type="Gene3D" id="2.60.40.420">
    <property type="entry name" value="Cupredoxins - blue copper proteins"/>
    <property type="match status" value="1"/>
</dbReference>
<dbReference type="InterPro" id="IPR045187">
    <property type="entry name" value="CcO_II"/>
</dbReference>
<dbReference type="InterPro" id="IPR002429">
    <property type="entry name" value="CcO_II-like_C"/>
</dbReference>
<dbReference type="InterPro" id="IPR034210">
    <property type="entry name" value="CcO_II_C"/>
</dbReference>
<dbReference type="InterPro" id="IPR001505">
    <property type="entry name" value="Copper_CuA"/>
</dbReference>
<dbReference type="InterPro" id="IPR008972">
    <property type="entry name" value="Cupredoxin"/>
</dbReference>
<dbReference type="InterPro" id="IPR014222">
    <property type="entry name" value="Cyt_c_oxidase_su2"/>
</dbReference>
<dbReference type="InterPro" id="IPR011759">
    <property type="entry name" value="Cyt_c_oxidase_su2_TM_dom"/>
</dbReference>
<dbReference type="InterPro" id="IPR036257">
    <property type="entry name" value="Cyt_c_oxidase_su2_TM_sf"/>
</dbReference>
<dbReference type="NCBIfam" id="TIGR02866">
    <property type="entry name" value="CoxB"/>
    <property type="match status" value="1"/>
</dbReference>
<dbReference type="PANTHER" id="PTHR22888:SF9">
    <property type="entry name" value="CYTOCHROME C OXIDASE SUBUNIT 2"/>
    <property type="match status" value="1"/>
</dbReference>
<dbReference type="PANTHER" id="PTHR22888">
    <property type="entry name" value="CYTOCHROME C OXIDASE, SUBUNIT II"/>
    <property type="match status" value="1"/>
</dbReference>
<dbReference type="Pfam" id="PF00116">
    <property type="entry name" value="COX2"/>
    <property type="match status" value="1"/>
</dbReference>
<dbReference type="Pfam" id="PF02790">
    <property type="entry name" value="COX2_TM"/>
    <property type="match status" value="1"/>
</dbReference>
<dbReference type="PRINTS" id="PR01166">
    <property type="entry name" value="CYCOXIDASEII"/>
</dbReference>
<dbReference type="SUPFAM" id="SSF49503">
    <property type="entry name" value="Cupredoxins"/>
    <property type="match status" value="1"/>
</dbReference>
<dbReference type="SUPFAM" id="SSF81464">
    <property type="entry name" value="Cytochrome c oxidase subunit II-like, transmembrane region"/>
    <property type="match status" value="1"/>
</dbReference>
<dbReference type="PROSITE" id="PS00078">
    <property type="entry name" value="COX2"/>
    <property type="match status" value="1"/>
</dbReference>
<dbReference type="PROSITE" id="PS50857">
    <property type="entry name" value="COX2_CUA"/>
    <property type="match status" value="1"/>
</dbReference>
<dbReference type="PROSITE" id="PS50999">
    <property type="entry name" value="COX2_TM"/>
    <property type="match status" value="1"/>
</dbReference>
<reference key="1">
    <citation type="journal article" date="1995" name="J. Mol. Evol.">
        <title>Mammalian mitochondrial DNA evolution: a comparison of the cytochrome b and cytochrome c oxidase II genes.</title>
        <authorList>
            <person name="Honeycutt R.L."/>
            <person name="Nedbal M.A."/>
            <person name="Adkins R.M."/>
            <person name="Janecek L.L."/>
        </authorList>
    </citation>
    <scope>NUCLEOTIDE SEQUENCE [GENOMIC DNA]</scope>
</reference>
<gene>
    <name type="primary">MT-CO2</name>
    <name type="synonym">COII</name>
    <name type="synonym">COXII</name>
    <name type="synonym">MTCO2</name>
</gene>
<feature type="chain" id="PRO_0000183524" description="Cytochrome c oxidase subunit 2">
    <location>
        <begin position="1"/>
        <end position="227"/>
    </location>
</feature>
<feature type="topological domain" description="Mitochondrial intermembrane" evidence="4">
    <location>
        <begin position="1"/>
        <end position="14"/>
    </location>
</feature>
<feature type="transmembrane region" description="Helical; Name=I" evidence="4">
    <location>
        <begin position="15"/>
        <end position="45"/>
    </location>
</feature>
<feature type="topological domain" description="Mitochondrial matrix" evidence="4">
    <location>
        <begin position="46"/>
        <end position="59"/>
    </location>
</feature>
<feature type="transmembrane region" description="Helical; Name=II" evidence="4">
    <location>
        <begin position="60"/>
        <end position="87"/>
    </location>
</feature>
<feature type="topological domain" description="Mitochondrial intermembrane" evidence="4">
    <location>
        <begin position="88"/>
        <end position="227"/>
    </location>
</feature>
<feature type="binding site" evidence="4">
    <location>
        <position position="161"/>
    </location>
    <ligand>
        <name>Cu cation</name>
        <dbReference type="ChEBI" id="CHEBI:23378"/>
        <label>A1</label>
    </ligand>
</feature>
<feature type="binding site" evidence="4">
    <location>
        <position position="196"/>
    </location>
    <ligand>
        <name>Cu cation</name>
        <dbReference type="ChEBI" id="CHEBI:23378"/>
        <label>A1</label>
    </ligand>
</feature>
<feature type="binding site" evidence="4">
    <location>
        <position position="196"/>
    </location>
    <ligand>
        <name>Cu cation</name>
        <dbReference type="ChEBI" id="CHEBI:23378"/>
        <label>A2</label>
    </ligand>
</feature>
<feature type="binding site" evidence="4">
    <location>
        <position position="198"/>
    </location>
    <ligand>
        <name>Cu cation</name>
        <dbReference type="ChEBI" id="CHEBI:23378"/>
        <label>A2</label>
    </ligand>
</feature>
<feature type="binding site" evidence="4">
    <location>
        <position position="198"/>
    </location>
    <ligand>
        <name>Mg(2+)</name>
        <dbReference type="ChEBI" id="CHEBI:18420"/>
        <note>ligand shared with MT-CO1</note>
    </ligand>
</feature>
<feature type="binding site" evidence="4">
    <location>
        <position position="200"/>
    </location>
    <ligand>
        <name>Cu cation</name>
        <dbReference type="ChEBI" id="CHEBI:23378"/>
        <label>A1</label>
    </ligand>
</feature>
<feature type="binding site" evidence="4">
    <location>
        <position position="200"/>
    </location>
    <ligand>
        <name>Cu cation</name>
        <dbReference type="ChEBI" id="CHEBI:23378"/>
        <label>A2</label>
    </ligand>
</feature>
<feature type="binding site" evidence="4">
    <location>
        <position position="204"/>
    </location>
    <ligand>
        <name>Cu cation</name>
        <dbReference type="ChEBI" id="CHEBI:23378"/>
        <label>A2</label>
    </ligand>
</feature>
<feature type="binding site" evidence="4">
    <location>
        <position position="207"/>
    </location>
    <ligand>
        <name>Cu cation</name>
        <dbReference type="ChEBI" id="CHEBI:23378"/>
        <label>A1</label>
    </ligand>
</feature>
<feature type="modified residue" description="Phosphotyrosine" evidence="2">
    <location>
        <position position="218"/>
    </location>
</feature>
<protein>
    <recommendedName>
        <fullName>Cytochrome c oxidase subunit 2</fullName>
        <ecNumber>7.1.1.9</ecNumber>
    </recommendedName>
    <alternativeName>
        <fullName>Cytochrome c oxidase polypeptide II</fullName>
    </alternativeName>
</protein>
<proteinExistence type="inferred from homology"/>
<organism>
    <name type="scientific">Bubalus depressicornis</name>
    <name type="common">Lowland anoa</name>
    <name type="synonym">Anoa depressicornis</name>
    <dbReference type="NCBI Taxonomy" id="27596"/>
    <lineage>
        <taxon>Eukaryota</taxon>
        <taxon>Metazoa</taxon>
        <taxon>Chordata</taxon>
        <taxon>Craniata</taxon>
        <taxon>Vertebrata</taxon>
        <taxon>Euteleostomi</taxon>
        <taxon>Mammalia</taxon>
        <taxon>Eutheria</taxon>
        <taxon>Laurasiatheria</taxon>
        <taxon>Artiodactyla</taxon>
        <taxon>Ruminantia</taxon>
        <taxon>Pecora</taxon>
        <taxon>Bovidae</taxon>
        <taxon>Bovinae</taxon>
        <taxon>Bubalus</taxon>
    </lineage>
</organism>
<comment type="function">
    <text evidence="3">Component of the cytochrome c oxidase, the last enzyme in the mitochondrial electron transport chain which drives oxidative phosphorylation. The respiratory chain contains 3 multisubunit complexes succinate dehydrogenase (complex II, CII), ubiquinol-cytochrome c oxidoreductase (cytochrome b-c1 complex, complex III, CIII) and cytochrome c oxidase (complex IV, CIV), that cooperate to transfer electrons derived from NADH and succinate to molecular oxygen, creating an electrochemical gradient over the inner membrane that drives transmembrane transport and the ATP synthase. Cytochrome c oxidase is the component of the respiratory chain that catalyzes the reduction of oxygen to water. Electrons originating from reduced cytochrome c in the intermembrane space (IMS) are transferred via the dinuclear copper A center (CU(A)) of subunit 2 and heme A of subunit 1 to the active site in subunit 1, a binuclear center (BNC) formed by heme A3 and copper B (CU(B)). The BNC reduces molecular oxygen to 2 water molecules using 4 electrons from cytochrome c in the IMS and 4 protons from the mitochondrial matrix.</text>
</comment>
<comment type="catalytic activity">
    <reaction evidence="3">
        <text>4 Fe(II)-[cytochrome c] + O2 + 8 H(+)(in) = 4 Fe(III)-[cytochrome c] + 2 H2O + 4 H(+)(out)</text>
        <dbReference type="Rhea" id="RHEA:11436"/>
        <dbReference type="Rhea" id="RHEA-COMP:10350"/>
        <dbReference type="Rhea" id="RHEA-COMP:14399"/>
        <dbReference type="ChEBI" id="CHEBI:15377"/>
        <dbReference type="ChEBI" id="CHEBI:15378"/>
        <dbReference type="ChEBI" id="CHEBI:15379"/>
        <dbReference type="ChEBI" id="CHEBI:29033"/>
        <dbReference type="ChEBI" id="CHEBI:29034"/>
        <dbReference type="EC" id="7.1.1.9"/>
    </reaction>
    <physiologicalReaction direction="left-to-right" evidence="3">
        <dbReference type="Rhea" id="RHEA:11437"/>
    </physiologicalReaction>
</comment>
<comment type="cofactor">
    <cofactor evidence="4">
        <name>Cu cation</name>
        <dbReference type="ChEBI" id="CHEBI:23378"/>
    </cofactor>
    <text evidence="4">Binds a dinuclear copper A center per subunit.</text>
</comment>
<comment type="subunit">
    <text evidence="1 4">Component of the cytochrome c oxidase (complex IV, CIV), a multisubunit enzyme composed of 14 subunits. The complex is composed of a catalytic core of 3 subunits MT-CO1, MT-CO2 and MT-CO3, encoded in the mitochondrial DNA, and 11 supernumerary subunits COX4I, COX5A, COX5B, COX6A, COX6B, COX6C, COX7A, COX7B, COX7C, COX8 and NDUFA4, which are encoded in the nuclear genome. The complex exists as a monomer or a dimer and forms supercomplexes (SCs) in the inner mitochondrial membrane with NADH-ubiquinone oxidoreductase (complex I, CI) and ubiquinol-cytochrome c oxidoreductase (cytochrome b-c1 complex, complex III, CIII), resulting in different assemblies (supercomplex SCI(1)III(2)IV(1) and megacomplex MCI(2)III(2)IV(2)) (By similarity). Found in a complex with TMEM177, COA6, COX18, COX20, SCO1 and SCO2. Interacts with TMEM177 in a COX20-dependent manner. Interacts with COX20. Interacts with COX16 (By similarity).</text>
</comment>
<comment type="subcellular location">
    <subcellularLocation>
        <location evidence="4">Mitochondrion inner membrane</location>
        <topology evidence="4">Multi-pass membrane protein</topology>
    </subcellularLocation>
</comment>
<comment type="similarity">
    <text evidence="5">Belongs to the cytochrome c oxidase subunit 2 family.</text>
</comment>
<geneLocation type="mitochondrion"/>
<sequence>MAYPMQLGFQDATSPIMEELLHFHDHTLMIVLLISSLVLYIISLMLTTKLTHTSTMDAQEVETIWTILPAIILILIALPSLRILYMMDEINNPSLTVKTMGHQWYWSYEYTDYEDLSFDSYMIPTSELKPGELRLLEVDNRVVLPMEMTIRMLVSSEDVLHSWAVPSLGLKTDAIPGRLNQTTLMSTRPGLYYGQCSEICGSNHSFMPIVLEMVPLKYFEKWSASML</sequence>
<evidence type="ECO:0000250" key="1">
    <source>
        <dbReference type="UniProtKB" id="P00403"/>
    </source>
</evidence>
<evidence type="ECO:0000250" key="2">
    <source>
        <dbReference type="UniProtKB" id="P00406"/>
    </source>
</evidence>
<evidence type="ECO:0000250" key="3">
    <source>
        <dbReference type="UniProtKB" id="P00410"/>
    </source>
</evidence>
<evidence type="ECO:0000250" key="4">
    <source>
        <dbReference type="UniProtKB" id="P68530"/>
    </source>
</evidence>
<evidence type="ECO:0000305" key="5"/>
<name>COX2_BUBDE</name>